<accession>Q641Y6</accession>
<dbReference type="EC" id="3.1.3.16"/>
<dbReference type="EMBL" id="BC082053">
    <property type="protein sequence ID" value="AAH82053.1"/>
    <property type="molecule type" value="mRNA"/>
</dbReference>
<dbReference type="RefSeq" id="NP_001005540.1">
    <property type="nucleotide sequence ID" value="NM_001005540.1"/>
</dbReference>
<dbReference type="SMR" id="Q641Y6"/>
<dbReference type="FunCoup" id="Q641Y6">
    <property type="interactions" value="1291"/>
</dbReference>
<dbReference type="STRING" id="10116.ENSRNOP00000016833"/>
<dbReference type="CarbonylDB" id="Q641Y6"/>
<dbReference type="GlyGen" id="Q641Y6">
    <property type="glycosylation" value="2 sites"/>
</dbReference>
<dbReference type="iPTMnet" id="Q641Y6"/>
<dbReference type="PhosphoSitePlus" id="Q641Y6"/>
<dbReference type="PaxDb" id="10116-ENSRNOP00000016833"/>
<dbReference type="GeneID" id="295341"/>
<dbReference type="KEGG" id="rno:295341"/>
<dbReference type="UCSC" id="RGD:1359104">
    <property type="organism name" value="rat"/>
</dbReference>
<dbReference type="AGR" id="RGD:1359104"/>
<dbReference type="CTD" id="333926"/>
<dbReference type="RGD" id="1359104">
    <property type="gene designation" value="Ppm1j"/>
</dbReference>
<dbReference type="eggNOG" id="KOG1323">
    <property type="taxonomic scope" value="Eukaryota"/>
</dbReference>
<dbReference type="HOGENOM" id="CLU_029072_2_0_1"/>
<dbReference type="InParanoid" id="Q641Y6"/>
<dbReference type="OrthoDB" id="10264738at2759"/>
<dbReference type="PhylomeDB" id="Q641Y6"/>
<dbReference type="TreeFam" id="TF314700"/>
<dbReference type="PRO" id="PR:Q641Y6"/>
<dbReference type="Proteomes" id="UP000002494">
    <property type="component" value="Unplaced"/>
</dbReference>
<dbReference type="GO" id="GO:0005739">
    <property type="term" value="C:mitochondrion"/>
    <property type="evidence" value="ECO:0000318"/>
    <property type="project" value="GO_Central"/>
</dbReference>
<dbReference type="GO" id="GO:0004741">
    <property type="term" value="F:[pyruvate dehydrogenase (acetyl-transferring)]-phosphatase activity"/>
    <property type="evidence" value="ECO:0000318"/>
    <property type="project" value="GO_Central"/>
</dbReference>
<dbReference type="GO" id="GO:0004722">
    <property type="term" value="F:protein serine/threonine phosphatase activity"/>
    <property type="evidence" value="ECO:0000266"/>
    <property type="project" value="RGD"/>
</dbReference>
<dbReference type="GO" id="GO:0007165">
    <property type="term" value="P:signal transduction"/>
    <property type="evidence" value="ECO:0000318"/>
    <property type="project" value="GO_Central"/>
</dbReference>
<dbReference type="CDD" id="cd00143">
    <property type="entry name" value="PP2Cc"/>
    <property type="match status" value="1"/>
</dbReference>
<dbReference type="Gene3D" id="3.60.40.10">
    <property type="entry name" value="PPM-type phosphatase domain"/>
    <property type="match status" value="1"/>
</dbReference>
<dbReference type="InterPro" id="IPR015655">
    <property type="entry name" value="PP2C"/>
</dbReference>
<dbReference type="InterPro" id="IPR036457">
    <property type="entry name" value="PPM-type-like_dom_sf"/>
</dbReference>
<dbReference type="InterPro" id="IPR001932">
    <property type="entry name" value="PPM-type_phosphatase-like_dom"/>
</dbReference>
<dbReference type="PANTHER" id="PTHR13832:SF305">
    <property type="entry name" value="PROTEIN PHOSPHATASE 1J"/>
    <property type="match status" value="1"/>
</dbReference>
<dbReference type="PANTHER" id="PTHR13832">
    <property type="entry name" value="PROTEIN PHOSPHATASE 2C"/>
    <property type="match status" value="1"/>
</dbReference>
<dbReference type="Pfam" id="PF00481">
    <property type="entry name" value="PP2C"/>
    <property type="match status" value="2"/>
</dbReference>
<dbReference type="SMART" id="SM00332">
    <property type="entry name" value="PP2Cc"/>
    <property type="match status" value="1"/>
</dbReference>
<dbReference type="SUPFAM" id="SSF81606">
    <property type="entry name" value="PP2C-like"/>
    <property type="match status" value="1"/>
</dbReference>
<dbReference type="PROSITE" id="PS51746">
    <property type="entry name" value="PPM_2"/>
    <property type="match status" value="1"/>
</dbReference>
<protein>
    <recommendedName>
        <fullName>Protein phosphatase 1J</fullName>
        <ecNumber>3.1.3.16</ecNumber>
    </recommendedName>
    <alternativeName>
        <fullName>Protein phosphatase 2C isoform zeta</fullName>
        <shortName>PP2C-zeta</shortName>
    </alternativeName>
</protein>
<gene>
    <name type="primary">Ppm1j</name>
    <name type="synonym">Ppp2cz</name>
</gene>
<evidence type="ECO:0000250" key="1"/>
<evidence type="ECO:0000250" key="2">
    <source>
        <dbReference type="UniProtKB" id="Q149T7"/>
    </source>
</evidence>
<evidence type="ECO:0000250" key="3">
    <source>
        <dbReference type="UniProtKB" id="Q5JR12"/>
    </source>
</evidence>
<evidence type="ECO:0000255" key="4">
    <source>
        <dbReference type="PROSITE-ProRule" id="PRU01082"/>
    </source>
</evidence>
<evidence type="ECO:0000256" key="5">
    <source>
        <dbReference type="SAM" id="MobiDB-lite"/>
    </source>
</evidence>
<evidence type="ECO:0000305" key="6"/>
<evidence type="ECO:0007744" key="7">
    <source>
    </source>
</evidence>
<sequence>MLNRVRSAVAHLVSSSGTSSQRSKSPDLPKAISPPPGALETPKSPGTKSGNEIPAPQKTAETPVSFSRPTFLQLSPGGLRRADDHVGRAVQSPPDTGRRLPWSTGYAEVINAGKSRHNEDQACCEVVYVESRRSITGVSREPSHNQGFSFYYWGLFDGHAGGGAAEMASRLLHRHIREQLKDLVEILQDPLPPPLCLPSTPGTPGVSSPSQLVSPQSWSPQKEVTHDSLVVGAIENAFQLMDEQMARERRGHLVEGGCCALVVVYLLGKMYVANAGDSRAIIVRNGEIIPMSREFTPETERQRLQLLGFLKPELLGSEFTHLEFPRRVQPKELGQRMLYRDQNMTGWAYKKIELEDLRFPLVCGEGKKARVMATIGVTRGLGDHNLKVCSSTLPIKPFLSCFPEVRVYDLTQYEHCPDDVLVLGTDGLWDVTNDSEVAATVDRVLSTYEPNDPSRYTALAQALVLGARGIPRDRGWRLPNNKLGSGDDISVFVIPLGGPGSSYS</sequence>
<proteinExistence type="evidence at protein level"/>
<name>PPM1J_RAT</name>
<organism>
    <name type="scientific">Rattus norvegicus</name>
    <name type="common">Rat</name>
    <dbReference type="NCBI Taxonomy" id="10116"/>
    <lineage>
        <taxon>Eukaryota</taxon>
        <taxon>Metazoa</taxon>
        <taxon>Chordata</taxon>
        <taxon>Craniata</taxon>
        <taxon>Vertebrata</taxon>
        <taxon>Euteleostomi</taxon>
        <taxon>Mammalia</taxon>
        <taxon>Eutheria</taxon>
        <taxon>Euarchontoglires</taxon>
        <taxon>Glires</taxon>
        <taxon>Rodentia</taxon>
        <taxon>Myomorpha</taxon>
        <taxon>Muroidea</taxon>
        <taxon>Muridae</taxon>
        <taxon>Murinae</taxon>
        <taxon>Rattus</taxon>
    </lineage>
</organism>
<feature type="chain" id="PRO_0000289060" description="Protein phosphatase 1J">
    <location>
        <begin position="1"/>
        <end position="504"/>
    </location>
</feature>
<feature type="domain" description="PPM-type phosphatase" evidence="4">
    <location>
        <begin position="103"/>
        <end position="496"/>
    </location>
</feature>
<feature type="region of interest" description="Disordered" evidence="5">
    <location>
        <begin position="1"/>
        <end position="102"/>
    </location>
</feature>
<feature type="region of interest" description="Disordered" evidence="5">
    <location>
        <begin position="194"/>
        <end position="217"/>
    </location>
</feature>
<feature type="compositionally biased region" description="Low complexity" evidence="5">
    <location>
        <begin position="14"/>
        <end position="23"/>
    </location>
</feature>
<feature type="compositionally biased region" description="Polar residues" evidence="5">
    <location>
        <begin position="59"/>
        <end position="73"/>
    </location>
</feature>
<feature type="compositionally biased region" description="Low complexity" evidence="5">
    <location>
        <begin position="197"/>
        <end position="217"/>
    </location>
</feature>
<feature type="modified residue" description="Phosphothreonine" evidence="2">
    <location>
        <position position="41"/>
    </location>
</feature>
<feature type="modified residue" description="Phosphoserine" evidence="3">
    <location>
        <position position="65"/>
    </location>
</feature>
<feature type="modified residue" description="Phosphoserine" evidence="7">
    <location>
        <position position="75"/>
    </location>
</feature>
<comment type="catalytic activity">
    <reaction>
        <text>O-phospho-L-seryl-[protein] + H2O = L-seryl-[protein] + phosphate</text>
        <dbReference type="Rhea" id="RHEA:20629"/>
        <dbReference type="Rhea" id="RHEA-COMP:9863"/>
        <dbReference type="Rhea" id="RHEA-COMP:11604"/>
        <dbReference type="ChEBI" id="CHEBI:15377"/>
        <dbReference type="ChEBI" id="CHEBI:29999"/>
        <dbReference type="ChEBI" id="CHEBI:43474"/>
        <dbReference type="ChEBI" id="CHEBI:83421"/>
        <dbReference type="EC" id="3.1.3.16"/>
    </reaction>
</comment>
<comment type="catalytic activity">
    <reaction>
        <text>O-phospho-L-threonyl-[protein] + H2O = L-threonyl-[protein] + phosphate</text>
        <dbReference type="Rhea" id="RHEA:47004"/>
        <dbReference type="Rhea" id="RHEA-COMP:11060"/>
        <dbReference type="Rhea" id="RHEA-COMP:11605"/>
        <dbReference type="ChEBI" id="CHEBI:15377"/>
        <dbReference type="ChEBI" id="CHEBI:30013"/>
        <dbReference type="ChEBI" id="CHEBI:43474"/>
        <dbReference type="ChEBI" id="CHEBI:61977"/>
        <dbReference type="EC" id="3.1.3.16"/>
    </reaction>
</comment>
<comment type="subunit">
    <text evidence="1">Interacts with UBE2I/UBC9.</text>
</comment>
<comment type="similarity">
    <text evidence="6">Belongs to the PP2C family.</text>
</comment>
<reference key="1">
    <citation type="journal article" date="2004" name="Genome Res.">
        <title>The status, quality, and expansion of the NIH full-length cDNA project: the Mammalian Gene Collection (MGC).</title>
        <authorList>
            <consortium name="The MGC Project Team"/>
        </authorList>
    </citation>
    <scope>NUCLEOTIDE SEQUENCE [LARGE SCALE MRNA]</scope>
    <source>
        <tissue>Testis</tissue>
    </source>
</reference>
<reference key="2">
    <citation type="journal article" date="2012" name="Nat. Commun.">
        <title>Quantitative maps of protein phosphorylation sites across 14 different rat organs and tissues.</title>
        <authorList>
            <person name="Lundby A."/>
            <person name="Secher A."/>
            <person name="Lage K."/>
            <person name="Nordsborg N.B."/>
            <person name="Dmytriyev A."/>
            <person name="Lundby C."/>
            <person name="Olsen J.V."/>
        </authorList>
    </citation>
    <scope>PHOSPHORYLATION [LARGE SCALE ANALYSIS] AT SER-75</scope>
    <scope>IDENTIFICATION BY MASS SPECTROMETRY [LARGE SCALE ANALYSIS]</scope>
</reference>
<keyword id="KW-0378">Hydrolase</keyword>
<keyword id="KW-0597">Phosphoprotein</keyword>
<keyword id="KW-0904">Protein phosphatase</keyword>
<keyword id="KW-1185">Reference proteome</keyword>